<accession>Q8C1Q4</accession>
<accession>Q45G31</accession>
<accession>Q6P6N6</accession>
<accession>Q8CI64</accession>
<accession>Q922A8</accession>
<feature type="signal peptide" evidence="2">
    <location>
        <begin position="1"/>
        <end position="21"/>
    </location>
</feature>
<feature type="chain" id="PRO_0000021681" description="Meteorin">
    <location>
        <begin position="22"/>
        <end position="291"/>
    </location>
</feature>
<feature type="disulfide bond" evidence="3">
    <location>
        <begin position="28"/>
        <end position="49"/>
    </location>
</feature>
<feature type="disulfide bond" evidence="3">
    <location>
        <begin position="80"/>
        <end position="116"/>
    </location>
</feature>
<feature type="disulfide bond" evidence="3">
    <location>
        <begin position="169"/>
        <end position="240"/>
    </location>
</feature>
<feature type="disulfide bond" evidence="3">
    <location>
        <begin position="172"/>
        <end position="264"/>
    </location>
</feature>
<feature type="disulfide bond" evidence="3">
    <location>
        <begin position="182"/>
        <end position="286"/>
    </location>
</feature>
<feature type="splice variant" id="VSP_010844" description="In isoform 2." evidence="4">
    <location>
        <begin position="1"/>
        <end position="164"/>
    </location>
</feature>
<feature type="splice variant" id="VSP_010845" description="In isoform 2." evidence="4">
    <original>VD</original>
    <variation>ML</variation>
    <location>
        <begin position="165"/>
        <end position="166"/>
    </location>
</feature>
<feature type="strand" evidence="6">
    <location>
        <begin position="30"/>
        <end position="34"/>
    </location>
</feature>
<feature type="strand" evidence="6">
    <location>
        <begin position="43"/>
        <end position="47"/>
    </location>
</feature>
<feature type="strand" evidence="6">
    <location>
        <begin position="49"/>
        <end position="58"/>
    </location>
</feature>
<feature type="strand" evidence="6">
    <location>
        <begin position="61"/>
        <end position="67"/>
    </location>
</feature>
<feature type="strand" evidence="6">
    <location>
        <begin position="77"/>
        <end position="83"/>
    </location>
</feature>
<feature type="strand" evidence="6">
    <location>
        <begin position="89"/>
        <end position="95"/>
    </location>
</feature>
<feature type="strand" evidence="6">
    <location>
        <begin position="101"/>
        <end position="105"/>
    </location>
</feature>
<feature type="strand" evidence="6">
    <location>
        <begin position="115"/>
        <end position="119"/>
    </location>
</feature>
<feature type="strand" evidence="6">
    <location>
        <begin position="126"/>
        <end position="131"/>
    </location>
</feature>
<feature type="strand" evidence="6">
    <location>
        <begin position="141"/>
        <end position="149"/>
    </location>
</feature>
<feature type="helix" evidence="7">
    <location>
        <begin position="174"/>
        <end position="183"/>
    </location>
</feature>
<feature type="strand" evidence="7">
    <location>
        <begin position="184"/>
        <end position="198"/>
    </location>
</feature>
<feature type="turn" evidence="7">
    <location>
        <begin position="199"/>
        <end position="202"/>
    </location>
</feature>
<feature type="strand" evidence="7">
    <location>
        <begin position="203"/>
        <end position="219"/>
    </location>
</feature>
<feature type="strand" evidence="7">
    <location>
        <begin position="228"/>
        <end position="237"/>
    </location>
</feature>
<feature type="helix" evidence="7">
    <location>
        <begin position="238"/>
        <end position="240"/>
    </location>
</feature>
<feature type="strand" evidence="7">
    <location>
        <begin position="248"/>
        <end position="256"/>
    </location>
</feature>
<feature type="strand" evidence="7">
    <location>
        <begin position="259"/>
        <end position="264"/>
    </location>
</feature>
<feature type="helix" evidence="7">
    <location>
        <begin position="268"/>
        <end position="280"/>
    </location>
</feature>
<organism>
    <name type="scientific">Mus musculus</name>
    <name type="common">Mouse</name>
    <dbReference type="NCBI Taxonomy" id="10090"/>
    <lineage>
        <taxon>Eukaryota</taxon>
        <taxon>Metazoa</taxon>
        <taxon>Chordata</taxon>
        <taxon>Craniata</taxon>
        <taxon>Vertebrata</taxon>
        <taxon>Euteleostomi</taxon>
        <taxon>Mammalia</taxon>
        <taxon>Eutheria</taxon>
        <taxon>Euarchontoglires</taxon>
        <taxon>Glires</taxon>
        <taxon>Rodentia</taxon>
        <taxon>Myomorpha</taxon>
        <taxon>Muroidea</taxon>
        <taxon>Muridae</taxon>
        <taxon>Murinae</taxon>
        <taxon>Mus</taxon>
        <taxon>Mus</taxon>
    </lineage>
</organism>
<keyword id="KW-0002">3D-structure</keyword>
<keyword id="KW-0025">Alternative splicing</keyword>
<keyword id="KW-0217">Developmental protein</keyword>
<keyword id="KW-0221">Differentiation</keyword>
<keyword id="KW-0903">Direct protein sequencing</keyword>
<keyword id="KW-1015">Disulfide bond</keyword>
<keyword id="KW-0524">Neurogenesis</keyword>
<keyword id="KW-1185">Reference proteome</keyword>
<keyword id="KW-0964">Secreted</keyword>
<keyword id="KW-0732">Signal</keyword>
<comment type="function">
    <text evidence="1">Involved in both glial cell differentiation and axonal network formation during neurogenesis. Promotes astrocyte differentiation and transforms cerebellar astrocytes into radial glia. Also induces axonal extension in small and intermediate neurons of sensory ganglia by activating nearby satellite glia.</text>
</comment>
<comment type="subunit">
    <text evidence="2">Monomer.</text>
</comment>
<comment type="subcellular location">
    <subcellularLocation>
        <location evidence="1">Secreted</location>
    </subcellularLocation>
</comment>
<comment type="alternative products">
    <event type="alternative splicing"/>
    <isoform>
        <id>Q8C1Q4-1</id>
        <name>1</name>
        <sequence type="displayed"/>
    </isoform>
    <isoform>
        <id>Q8C1Q4-2</id>
        <name>2</name>
        <sequence type="described" ref="VSP_010844 VSP_010845"/>
    </isoform>
</comment>
<comment type="tissue specificity">
    <text evidence="1 2">Highly expressed in brain. Expressed in undifferentiated neural progenitors and in astrocyte lineage, particularly in Bergmann glia, a subtype of radial glia, and a few discrete neuronal populations residing in the superior colliculus, the ocular motor nucleus, the raphe and pontine nuclei, and in various thalamic nuclei. Weakly expressed in heart, kidney, skeletal muscle, spleen, testis, gut and lung.</text>
</comment>
<comment type="induction">
    <text evidence="1">By all-trans retinoic acid (ATRA).</text>
</comment>
<comment type="miscellaneous">
    <text>Was called meteorin because it can transform glial cells into cells with an elongated trail.</text>
</comment>
<comment type="similarity">
    <text evidence="5">Belongs to the meteorin family.</text>
</comment>
<comment type="sequence caution" evidence="5">
    <conflict type="erroneous initiation">
        <sequence resource="EMBL-CDS" id="AAH37181"/>
    </conflict>
</comment>
<evidence type="ECO:0000269" key="1">
    <source>
    </source>
</evidence>
<evidence type="ECO:0000269" key="2">
    <source>
    </source>
</evidence>
<evidence type="ECO:0000269" key="3">
    <source>
    </source>
</evidence>
<evidence type="ECO:0000303" key="4">
    <source>
    </source>
</evidence>
<evidence type="ECO:0000305" key="5"/>
<evidence type="ECO:0007829" key="6">
    <source>
        <dbReference type="PDB" id="7TL6"/>
    </source>
</evidence>
<evidence type="ECO:0007829" key="7">
    <source>
        <dbReference type="PDB" id="7TLH"/>
    </source>
</evidence>
<protein>
    <recommendedName>
        <fullName>Meteorin</fullName>
    </recommendedName>
    <alternativeName>
        <fullName>Hypoxia/reoxygenation regulatory factor</fullName>
    </alternativeName>
</protein>
<dbReference type="EMBL" id="DQ133462">
    <property type="protein sequence ID" value="AAZ41748.1"/>
    <property type="molecule type" value="mRNA"/>
</dbReference>
<dbReference type="EMBL" id="BC008695">
    <property type="protein sequence ID" value="AAH08695.1"/>
    <property type="molecule type" value="mRNA"/>
</dbReference>
<dbReference type="EMBL" id="BC037181">
    <property type="protein sequence ID" value="AAH37181.1"/>
    <property type="status" value="ALT_INIT"/>
    <property type="molecule type" value="mRNA"/>
</dbReference>
<dbReference type="EMBL" id="BC062118">
    <property type="protein sequence ID" value="AAH62118.1"/>
    <property type="molecule type" value="mRNA"/>
</dbReference>
<dbReference type="CCDS" id="CCDS28529.1">
    <molecule id="Q8C1Q4-1"/>
</dbReference>
<dbReference type="RefSeq" id="NP_598480.1">
    <molecule id="Q8C1Q4-1"/>
    <property type="nucleotide sequence ID" value="NM_133719.2"/>
</dbReference>
<dbReference type="PDB" id="7TL6">
    <property type="method" value="X-ray"/>
    <property type="resolution" value="2.30 A"/>
    <property type="chains" value="A/B=22-155"/>
</dbReference>
<dbReference type="PDB" id="7TLH">
    <property type="method" value="X-ray"/>
    <property type="resolution" value="1.74 A"/>
    <property type="chains" value="A/B/C/D=156-291"/>
</dbReference>
<dbReference type="PDBsum" id="7TL6"/>
<dbReference type="PDBsum" id="7TLH"/>
<dbReference type="SMR" id="Q8C1Q4"/>
<dbReference type="CORUM" id="Q8C1Q4"/>
<dbReference type="FunCoup" id="Q8C1Q4">
    <property type="interactions" value="301"/>
</dbReference>
<dbReference type="STRING" id="10090.ENSMUSP00000127275"/>
<dbReference type="PhosphoSitePlus" id="Q8C1Q4"/>
<dbReference type="PaxDb" id="10090-ENSMUSP00000127275"/>
<dbReference type="ProteomicsDB" id="295886">
    <molecule id="Q8C1Q4-1"/>
</dbReference>
<dbReference type="ProteomicsDB" id="295887">
    <molecule id="Q8C1Q4-2"/>
</dbReference>
<dbReference type="Antibodypedia" id="22849">
    <property type="antibodies" value="109 antibodies from 15 providers"/>
</dbReference>
<dbReference type="Ensembl" id="ENSMUST00000165838.9">
    <molecule id="Q8C1Q4-1"/>
    <property type="protein sequence ID" value="ENSMUSP00000127275.2"/>
    <property type="gene ID" value="ENSMUSG00000002274.15"/>
</dbReference>
<dbReference type="GeneID" id="70083"/>
<dbReference type="KEGG" id="mmu:70083"/>
<dbReference type="UCSC" id="uc008bbz.1">
    <molecule id="Q8C1Q4-1"/>
    <property type="organism name" value="mouse"/>
</dbReference>
<dbReference type="AGR" id="MGI:1917333"/>
<dbReference type="CTD" id="79006"/>
<dbReference type="MGI" id="MGI:1917333">
    <property type="gene designation" value="Metrn"/>
</dbReference>
<dbReference type="VEuPathDB" id="HostDB:ENSMUSG00000002274"/>
<dbReference type="eggNOG" id="ENOG502QUQB">
    <property type="taxonomic scope" value="Eukaryota"/>
</dbReference>
<dbReference type="GeneTree" id="ENSGT00390000001390"/>
<dbReference type="HOGENOM" id="CLU_069970_0_0_1"/>
<dbReference type="InParanoid" id="Q8C1Q4"/>
<dbReference type="OMA" id="VHWGPRE"/>
<dbReference type="OrthoDB" id="6092325at2759"/>
<dbReference type="PhylomeDB" id="Q8C1Q4"/>
<dbReference type="TreeFam" id="TF330918"/>
<dbReference type="BioGRID-ORCS" id="70083">
    <property type="hits" value="3 hits in 76 CRISPR screens"/>
</dbReference>
<dbReference type="PRO" id="PR:Q8C1Q4"/>
<dbReference type="Proteomes" id="UP000000589">
    <property type="component" value="Chromosome 17"/>
</dbReference>
<dbReference type="RNAct" id="Q8C1Q4">
    <property type="molecule type" value="protein"/>
</dbReference>
<dbReference type="Bgee" id="ENSMUSG00000002274">
    <property type="expression patterns" value="Expressed in floor plate of midbrain and 252 other cell types or tissues"/>
</dbReference>
<dbReference type="ExpressionAtlas" id="Q8C1Q4">
    <property type="expression patterns" value="baseline and differential"/>
</dbReference>
<dbReference type="GO" id="GO:0005615">
    <property type="term" value="C:extracellular space"/>
    <property type="evidence" value="ECO:0000314"/>
    <property type="project" value="MGI"/>
</dbReference>
<dbReference type="GO" id="GO:0007409">
    <property type="term" value="P:axonogenesis"/>
    <property type="evidence" value="ECO:0000314"/>
    <property type="project" value="MGI"/>
</dbReference>
<dbReference type="GO" id="GO:0050772">
    <property type="term" value="P:positive regulation of axonogenesis"/>
    <property type="evidence" value="ECO:0000314"/>
    <property type="project" value="MGI"/>
</dbReference>
<dbReference type="GO" id="GO:0060019">
    <property type="term" value="P:radial glial cell differentiation"/>
    <property type="evidence" value="ECO:0000314"/>
    <property type="project" value="MGI"/>
</dbReference>
<dbReference type="InterPro" id="IPR051998">
    <property type="entry name" value="Meteorin-like"/>
</dbReference>
<dbReference type="PANTHER" id="PTHR28593:SF2">
    <property type="entry name" value="METEORIN"/>
    <property type="match status" value="1"/>
</dbReference>
<dbReference type="PANTHER" id="PTHR28593">
    <property type="entry name" value="METEORIN-LIKE PROTEIN"/>
    <property type="match status" value="1"/>
</dbReference>
<sequence>MLVATLLCALCCGLLAASAHAGYSEDRCSWRGSGLTQEPGSVGQLTLDCTEGAIEWLYPAGALRLTLGGPDPGTRPSIVCLRPERPFAGAQVFAERMTGNLELLLAEGPDLAGGRCMRWGPRERRALFLQATPHRDISRRVAAFRFELHEDQRAEMSPQAQGLGVDGACRPCSDAELLLAACTSDFVIHGTIHGVAHDTELQESVITVVVARVIRQTLPLFKEGSSEGQGRASIRTLLRCGVRPGPGSFLFMGWSRFGEAWLGCAPRFQEFSRVYSAALTTHLNPCEMALD</sequence>
<name>METRN_MOUSE</name>
<proteinExistence type="evidence at protein level"/>
<reference key="1">
    <citation type="journal article" date="2004" name="EMBO J.">
        <title>Meteorin: a secreted protein that regulates glial cell differentiation and promotes axonal extension.</title>
        <authorList>
            <person name="Nishino J."/>
            <person name="Yamashita K."/>
            <person name="Hashiguchi H."/>
            <person name="Fujii H."/>
            <person name="Shimazaki T."/>
            <person name="Hamada H."/>
        </authorList>
    </citation>
    <scope>NUCLEOTIDE SEQUENCE [MRNA] (ISOFORM 1)</scope>
    <scope>FUNCTION</scope>
    <scope>SUBCELLULAR LOCATION</scope>
    <scope>TISSUE SPECIFICITY</scope>
    <scope>INDUCTION</scope>
</reference>
<reference key="2">
    <citation type="submission" date="2005-07" db="EMBL/GenBank/DDBJ databases">
        <authorList>
            <person name="Park J.A."/>
            <person name="Kim K.-W."/>
        </authorList>
    </citation>
    <scope>NUCLEOTIDE SEQUENCE [MRNA] (ISOFORM 1)</scope>
    <source>
        <tissue>Embryo</tissue>
    </source>
</reference>
<reference key="3">
    <citation type="journal article" date="2004" name="Genome Res.">
        <title>The status, quality, and expansion of the NIH full-length cDNA project: the Mammalian Gene Collection (MGC).</title>
        <authorList>
            <consortium name="The MGC Project Team"/>
        </authorList>
    </citation>
    <scope>NUCLEOTIDE SEQUENCE [LARGE SCALE MRNA] (ISOFORM 2)</scope>
    <scope>NUCLEOTIDE SEQUENCE [LARGE SCALE MRNA] OF 6-291 (ISOFORM 1)</scope>
    <source>
        <strain>C57BL/6J</strain>
        <strain>FVB/N</strain>
        <tissue>Brain</tissue>
        <tissue>Kidney</tissue>
        <tissue>Mammary gland</tissue>
    </source>
</reference>
<reference key="4">
    <citation type="journal article" date="2009" name="J. Mol. Neurosci.">
        <title>Characterization of Meteorin--an evolutionary conserved neurotrophic factor.</title>
        <authorList>
            <person name="Jorgensen J.R."/>
            <person name="Thompson L."/>
            <person name="Fjord-Larsen L."/>
            <person name="Krabbe C."/>
            <person name="Torp M."/>
            <person name="Kalkkinen N."/>
            <person name="Hansen C."/>
            <person name="Wahlberg L."/>
        </authorList>
    </citation>
    <scope>PROTEIN SEQUENCE OF 22-31</scope>
    <scope>TISSUE SPECIFICITY</scope>
    <scope>SUBUNIT</scope>
    <scope>DISULFIDE BONDS</scope>
</reference>
<reference key="5">
    <citation type="journal article" date="2017" name="Anal. Chem.">
        <title>Determination of the disulfide structure of murine Meteorin, a neurotrophic factor, by LC-MS and electron transfer dissociation-high-energy collisional dissociation analysis of proteolytic fragments.</title>
        <authorList>
            <person name="Wen D."/>
            <person name="Xiao Y."/>
            <person name="Vecchi M.M."/>
            <person name="Gong B.J."/>
            <person name="Dolnikova J."/>
            <person name="Pepinsky R.B."/>
        </authorList>
    </citation>
    <scope>DISULFIDE BONDS</scope>
</reference>
<gene>
    <name type="primary">Metrn</name>
    <name type="synonym">Hyrac</name>
</gene>